<feature type="chain" id="PRO_0000304163" description="Uncharacterized protein SAUSA300_1119">
    <location>
        <begin position="1"/>
        <end position="548"/>
    </location>
</feature>
<feature type="domain" description="DhaL" evidence="1">
    <location>
        <begin position="8"/>
        <end position="200"/>
    </location>
</feature>
<proteinExistence type="predicted"/>
<name>Y1119_STAA3</name>
<accession>Q2FHL2</accession>
<dbReference type="EMBL" id="CP000255">
    <property type="protein sequence ID" value="ABD22391.1"/>
    <property type="molecule type" value="Genomic_DNA"/>
</dbReference>
<dbReference type="SASBDB" id="Q2FHL2"/>
<dbReference type="SMR" id="Q2FHL2"/>
<dbReference type="KEGG" id="saa:SAUSA300_1119"/>
<dbReference type="HOGENOM" id="CLU_017496_1_0_9"/>
<dbReference type="OMA" id="QPLYYYI"/>
<dbReference type="Proteomes" id="UP000001939">
    <property type="component" value="Chromosome"/>
</dbReference>
<dbReference type="GO" id="GO:0004371">
    <property type="term" value="F:glycerone kinase activity"/>
    <property type="evidence" value="ECO:0007669"/>
    <property type="project" value="InterPro"/>
</dbReference>
<dbReference type="GO" id="GO:0006071">
    <property type="term" value="P:glycerol metabolic process"/>
    <property type="evidence" value="ECO:0007669"/>
    <property type="project" value="InterPro"/>
</dbReference>
<dbReference type="Gene3D" id="1.25.40.340">
    <property type="match status" value="1"/>
</dbReference>
<dbReference type="InterPro" id="IPR050270">
    <property type="entry name" value="DegV_domain_contain"/>
</dbReference>
<dbReference type="InterPro" id="IPR004007">
    <property type="entry name" value="DhaL_dom"/>
</dbReference>
<dbReference type="InterPro" id="IPR036117">
    <property type="entry name" value="DhaL_dom_sf"/>
</dbReference>
<dbReference type="InterPro" id="IPR033470">
    <property type="entry name" value="FakA-like_C"/>
</dbReference>
<dbReference type="InterPro" id="IPR048394">
    <property type="entry name" value="FakA-like_M"/>
</dbReference>
<dbReference type="InterPro" id="IPR019986">
    <property type="entry name" value="YloV-like"/>
</dbReference>
<dbReference type="NCBIfam" id="NF038248">
    <property type="entry name" value="FakA_VfrB"/>
    <property type="match status" value="1"/>
</dbReference>
<dbReference type="NCBIfam" id="TIGR03599">
    <property type="entry name" value="YloV"/>
    <property type="match status" value="1"/>
</dbReference>
<dbReference type="PANTHER" id="PTHR33434">
    <property type="entry name" value="DEGV DOMAIN-CONTAINING PROTEIN DR_1986-RELATED"/>
    <property type="match status" value="1"/>
</dbReference>
<dbReference type="PANTHER" id="PTHR33434:SF4">
    <property type="entry name" value="PHOSPHATASE PROTEIN"/>
    <property type="match status" value="1"/>
</dbReference>
<dbReference type="Pfam" id="PF02734">
    <property type="entry name" value="Dak2"/>
    <property type="match status" value="1"/>
</dbReference>
<dbReference type="Pfam" id="PF13684">
    <property type="entry name" value="FakA-like_C"/>
    <property type="match status" value="1"/>
</dbReference>
<dbReference type="Pfam" id="PF21645">
    <property type="entry name" value="FakA-like_M"/>
    <property type="match status" value="1"/>
</dbReference>
<dbReference type="SMART" id="SM01121">
    <property type="entry name" value="Dak1_2"/>
    <property type="match status" value="1"/>
</dbReference>
<dbReference type="SMART" id="SM01120">
    <property type="entry name" value="Dak2"/>
    <property type="match status" value="1"/>
</dbReference>
<dbReference type="SUPFAM" id="SSF101473">
    <property type="entry name" value="DhaL-like"/>
    <property type="match status" value="1"/>
</dbReference>
<dbReference type="PROSITE" id="PS51480">
    <property type="entry name" value="DHAL"/>
    <property type="match status" value="1"/>
</dbReference>
<reference key="1">
    <citation type="journal article" date="2006" name="Lancet">
        <title>Complete genome sequence of USA300, an epidemic clone of community-acquired meticillin-resistant Staphylococcus aureus.</title>
        <authorList>
            <person name="Diep B.A."/>
            <person name="Gill S.R."/>
            <person name="Chang R.F."/>
            <person name="Phan T.H."/>
            <person name="Chen J.H."/>
            <person name="Davidson M.G."/>
            <person name="Lin F."/>
            <person name="Lin J."/>
            <person name="Carleton H.A."/>
            <person name="Mongodin E.F."/>
            <person name="Sensabaugh G.F."/>
            <person name="Perdreau-Remington F."/>
        </authorList>
    </citation>
    <scope>NUCLEOTIDE SEQUENCE [LARGE SCALE GENOMIC DNA]</scope>
    <source>
        <strain>USA300</strain>
    </source>
</reference>
<sequence length="548" mass="60516">MISKINGKLFADMIIQGAQNLSNNADLVDSLNVYPVPDGDTGTNMNLTMTSGREEVENNLSKNIGELGKTFSKGLLMGARGNSGVILSQLFRGFCKNIESESEINSKLLAESFQAGVETAYKAVMKPVEGTILTVAKDAAQAAIEKANNTEDCIELMEYIIVKANESLENTPNLLAVLKEVGVVDSGGKGLLCVYEGFLKALKGEKVEAKVAKIDKDEFVHDEHDFHGVINTEDIIYGYCTEMMVRFGKNKKAFDEQEFRQDMSQFGDSLLVINDEEIVKVHVHTEYPGKVFNYGQQYGELIKLKVENMREQHREVIRKEQHTAKPKMETVETAIITISMGEGISEIFKSMGATHIISGGQTMNPSTEDIVKVIEQSKCKRAIILPNNKNILMASEQAASIVDAEAVVIPTKSIPQGISALFQYDVDATLEENKAQMADSVNNVKSGSLTYAVRDTKIDGVEIKKDAFMGLIEDKIVSSQSDQLTTVTELLNEMLAEDSEILTVIIGQDAEQAVTDNMINWIEEQYPDVEVEVHEGGQPIYQYFFSVE</sequence>
<gene>
    <name type="ordered locus">SAUSA300_1119</name>
</gene>
<organism>
    <name type="scientific">Staphylococcus aureus (strain USA300)</name>
    <dbReference type="NCBI Taxonomy" id="367830"/>
    <lineage>
        <taxon>Bacteria</taxon>
        <taxon>Bacillati</taxon>
        <taxon>Bacillota</taxon>
        <taxon>Bacilli</taxon>
        <taxon>Bacillales</taxon>
        <taxon>Staphylococcaceae</taxon>
        <taxon>Staphylococcus</taxon>
    </lineage>
</organism>
<evidence type="ECO:0000255" key="1">
    <source>
        <dbReference type="PROSITE-ProRule" id="PRU00813"/>
    </source>
</evidence>
<protein>
    <recommendedName>
        <fullName>Uncharacterized protein SAUSA300_1119</fullName>
    </recommendedName>
</protein>